<name>KDGD_POLNA</name>
<protein>
    <recommendedName>
        <fullName evidence="1">Probable 5-dehydro-4-deoxyglucarate dehydratase</fullName>
        <ecNumber evidence="1">4.2.1.41</ecNumber>
    </recommendedName>
    <alternativeName>
        <fullName evidence="1">5-keto-4-deoxy-glucarate dehydratase</fullName>
        <shortName evidence="1">KDGDH</shortName>
    </alternativeName>
</protein>
<organism>
    <name type="scientific">Polaromonas naphthalenivorans (strain CJ2)</name>
    <dbReference type="NCBI Taxonomy" id="365044"/>
    <lineage>
        <taxon>Bacteria</taxon>
        <taxon>Pseudomonadati</taxon>
        <taxon>Pseudomonadota</taxon>
        <taxon>Betaproteobacteria</taxon>
        <taxon>Burkholderiales</taxon>
        <taxon>Comamonadaceae</taxon>
        <taxon>Polaromonas</taxon>
    </lineage>
</organism>
<sequence>MNPQDLKTIVSSGLLSFPVTDFDEQGDFRPKTYIERLEWLAPYGATALFAAGGTGEFFSLTGDEYPLIIKTAVNTCAGKVPIIAGVGGPTRFAIACAQEAERLGAHGILLLPHYLMEAGQEGLIAHVEAVCKSVKFGVIVYNRNVCKLTPESLAILADRCPNLIGFKDGVGNIETMSSIFMKMGDRFSYLGGLPTAEVYAAAYKALGTPVYSSAVFNFIPKTAMDFYHAVASDDLATQHRLLRDFFMPYLALRNKNPGYAVSIVKAGATIVGHDAGPVRPPLTDLKPAEMEELAVLIKSLGPQ</sequence>
<comment type="catalytic activity">
    <reaction evidence="1">
        <text>5-dehydro-4-deoxy-D-glucarate + H(+) = 2,5-dioxopentanoate + CO2 + H2O</text>
        <dbReference type="Rhea" id="RHEA:24608"/>
        <dbReference type="ChEBI" id="CHEBI:15377"/>
        <dbReference type="ChEBI" id="CHEBI:15378"/>
        <dbReference type="ChEBI" id="CHEBI:16526"/>
        <dbReference type="ChEBI" id="CHEBI:42819"/>
        <dbReference type="ChEBI" id="CHEBI:58136"/>
        <dbReference type="EC" id="4.2.1.41"/>
    </reaction>
</comment>
<comment type="pathway">
    <text evidence="1">Carbohydrate acid metabolism; D-glucarate degradation; 2,5-dioxopentanoate from D-glucarate: step 2/2.</text>
</comment>
<comment type="similarity">
    <text evidence="1">Belongs to the DapA family.</text>
</comment>
<evidence type="ECO:0000255" key="1">
    <source>
        <dbReference type="HAMAP-Rule" id="MF_00694"/>
    </source>
</evidence>
<dbReference type="EC" id="4.2.1.41" evidence="1"/>
<dbReference type="EMBL" id="CP000529">
    <property type="protein sequence ID" value="ABM36910.1"/>
    <property type="molecule type" value="Genomic_DNA"/>
</dbReference>
<dbReference type="RefSeq" id="WP_011800997.1">
    <property type="nucleotide sequence ID" value="NC_008781.1"/>
</dbReference>
<dbReference type="SMR" id="A1VMN2"/>
<dbReference type="STRING" id="365044.Pnap_1596"/>
<dbReference type="KEGG" id="pna:Pnap_1596"/>
<dbReference type="eggNOG" id="COG0329">
    <property type="taxonomic scope" value="Bacteria"/>
</dbReference>
<dbReference type="HOGENOM" id="CLU_049343_5_2_4"/>
<dbReference type="OrthoDB" id="8995637at2"/>
<dbReference type="BRENDA" id="4.2.1.41">
    <property type="organism ID" value="8912"/>
</dbReference>
<dbReference type="UniPathway" id="UPA00564">
    <property type="reaction ID" value="UER00628"/>
</dbReference>
<dbReference type="Proteomes" id="UP000000644">
    <property type="component" value="Chromosome"/>
</dbReference>
<dbReference type="GO" id="GO:0008840">
    <property type="term" value="F:4-hydroxy-tetrahydrodipicolinate synthase activity"/>
    <property type="evidence" value="ECO:0007669"/>
    <property type="project" value="TreeGrafter"/>
</dbReference>
<dbReference type="GO" id="GO:0047448">
    <property type="term" value="F:5-dehydro-4-deoxyglucarate dehydratase activity"/>
    <property type="evidence" value="ECO:0007669"/>
    <property type="project" value="UniProtKB-UniRule"/>
</dbReference>
<dbReference type="GO" id="GO:0042838">
    <property type="term" value="P:D-glucarate catabolic process"/>
    <property type="evidence" value="ECO:0007669"/>
    <property type="project" value="UniProtKB-UniRule"/>
</dbReference>
<dbReference type="CDD" id="cd00951">
    <property type="entry name" value="KDGDH"/>
    <property type="match status" value="1"/>
</dbReference>
<dbReference type="Gene3D" id="3.20.20.70">
    <property type="entry name" value="Aldolase class I"/>
    <property type="match status" value="1"/>
</dbReference>
<dbReference type="HAMAP" id="MF_00694">
    <property type="entry name" value="KDGDH"/>
    <property type="match status" value="1"/>
</dbReference>
<dbReference type="InterPro" id="IPR013785">
    <property type="entry name" value="Aldolase_TIM"/>
</dbReference>
<dbReference type="InterPro" id="IPR002220">
    <property type="entry name" value="DapA-like"/>
</dbReference>
<dbReference type="InterPro" id="IPR017655">
    <property type="entry name" value="Dehydro-deoxyglucarate_dehyd"/>
</dbReference>
<dbReference type="NCBIfam" id="TIGR03249">
    <property type="entry name" value="KdgD"/>
    <property type="match status" value="1"/>
</dbReference>
<dbReference type="NCBIfam" id="NF002958">
    <property type="entry name" value="PRK03620.1"/>
    <property type="match status" value="1"/>
</dbReference>
<dbReference type="PANTHER" id="PTHR12128:SF19">
    <property type="entry name" value="5-DEHYDRO-4-DEOXYGLUCARATE DEHYDRATASE 2-RELATED"/>
    <property type="match status" value="1"/>
</dbReference>
<dbReference type="PANTHER" id="PTHR12128">
    <property type="entry name" value="DIHYDRODIPICOLINATE SYNTHASE"/>
    <property type="match status" value="1"/>
</dbReference>
<dbReference type="Pfam" id="PF00701">
    <property type="entry name" value="DHDPS"/>
    <property type="match status" value="1"/>
</dbReference>
<dbReference type="PIRSF" id="PIRSF001365">
    <property type="entry name" value="DHDPS"/>
    <property type="match status" value="1"/>
</dbReference>
<dbReference type="SMART" id="SM01130">
    <property type="entry name" value="DHDPS"/>
    <property type="match status" value="1"/>
</dbReference>
<dbReference type="SUPFAM" id="SSF51569">
    <property type="entry name" value="Aldolase"/>
    <property type="match status" value="1"/>
</dbReference>
<feature type="chain" id="PRO_1000045405" description="Probable 5-dehydro-4-deoxyglucarate dehydratase">
    <location>
        <begin position="1"/>
        <end position="303"/>
    </location>
</feature>
<proteinExistence type="inferred from homology"/>
<keyword id="KW-0456">Lyase</keyword>
<keyword id="KW-1185">Reference proteome</keyword>
<accession>A1VMN2</accession>
<gene>
    <name type="ordered locus">Pnap_1596</name>
</gene>
<reference key="1">
    <citation type="journal article" date="2009" name="Environ. Microbiol.">
        <title>The genome of Polaromonas naphthalenivorans strain CJ2, isolated from coal tar-contaminated sediment, reveals physiological and metabolic versatility and evolution through extensive horizontal gene transfer.</title>
        <authorList>
            <person name="Yagi J.M."/>
            <person name="Sims D."/>
            <person name="Brettin T."/>
            <person name="Bruce D."/>
            <person name="Madsen E.L."/>
        </authorList>
    </citation>
    <scope>NUCLEOTIDE SEQUENCE [LARGE SCALE GENOMIC DNA]</scope>
    <source>
        <strain>CJ2</strain>
    </source>
</reference>